<protein>
    <recommendedName>
        <fullName evidence="1">Chitooligosaccharide deacetylase</fullName>
        <shortName evidence="1">COD</shortName>
        <ecNumber evidence="1">3.5.1.105</ecNumber>
    </recommendedName>
    <alternativeName>
        <fullName evidence="1">Chitin disaccharide deacetylase</fullName>
    </alternativeName>
    <alternativeName>
        <fullName evidence="1">Chitobiose deacetylase</fullName>
    </alternativeName>
    <alternativeName>
        <fullName evidence="1">Chitobiose-6P deacetylase</fullName>
    </alternativeName>
    <alternativeName>
        <fullName evidence="1">Chitotriose deacetylase</fullName>
    </alternativeName>
    <alternativeName>
        <fullName evidence="1">Chitotriose-6P deacetylase</fullName>
    </alternativeName>
</protein>
<gene>
    <name evidence="1" type="primary">chbG</name>
    <name type="ordered locus">SPA1527</name>
</gene>
<organism>
    <name type="scientific">Salmonella paratyphi A (strain ATCC 9150 / SARB42)</name>
    <dbReference type="NCBI Taxonomy" id="295319"/>
    <lineage>
        <taxon>Bacteria</taxon>
        <taxon>Pseudomonadati</taxon>
        <taxon>Pseudomonadota</taxon>
        <taxon>Gammaproteobacteria</taxon>
        <taxon>Enterobacterales</taxon>
        <taxon>Enterobacteriaceae</taxon>
        <taxon>Salmonella</taxon>
    </lineage>
</organism>
<comment type="function">
    <text evidence="1">Involved in the degradation of chitin. ChbG is essential for growth on the acetylated chitooligosaccharides chitobiose and chitotriose but is dispensable for growth on cellobiose and chitosan dimer, the deacetylated form of chitobiose. Deacetylation of chitobiose-6-P and chitotriose-6-P is necessary for both the activation of the chb promoter by the regulatory protein ChbR and the hydrolysis of phosphorylated beta-glucosides by the phospho-beta-glucosidase ChbF. Catalyzes the removal of only one acetyl group from chitobiose-6-P to yield monoacetylchitobiose-6-P, the inducer of ChbR and the substrate of ChbF.</text>
</comment>
<comment type="catalytic activity">
    <reaction evidence="1">
        <text>N,N'-diacetylchitobiose + H2O = N-acetyl-beta-D-glucosaminyl-(1-&gt;4)-D-glucosamine + acetate</text>
        <dbReference type="Rhea" id="RHEA:27469"/>
        <dbReference type="ChEBI" id="CHEBI:15377"/>
        <dbReference type="ChEBI" id="CHEBI:28681"/>
        <dbReference type="ChEBI" id="CHEBI:30089"/>
        <dbReference type="ChEBI" id="CHEBI:59910"/>
        <dbReference type="EC" id="3.5.1.105"/>
    </reaction>
</comment>
<comment type="catalytic activity">
    <reaction evidence="1">
        <text>diacetylchitobiose-6'-phosphate + H2O = N'-monoacetylchitobiose-6'-phosphate + acetate</text>
        <dbReference type="Rhea" id="RHEA:35083"/>
        <dbReference type="ChEBI" id="CHEBI:15377"/>
        <dbReference type="ChEBI" id="CHEBI:30089"/>
        <dbReference type="ChEBI" id="CHEBI:64883"/>
        <dbReference type="ChEBI" id="CHEBI:71315"/>
    </reaction>
</comment>
<comment type="cofactor">
    <cofactor evidence="1">
        <name>Mg(2+)</name>
        <dbReference type="ChEBI" id="CHEBI:18420"/>
    </cofactor>
</comment>
<comment type="pathway">
    <text evidence="1">Glycan degradation; chitin degradation.</text>
</comment>
<comment type="subunit">
    <text evidence="1">Homodimer.</text>
</comment>
<comment type="subcellular location">
    <subcellularLocation>
        <location evidence="1">Cytoplasm</location>
    </subcellularLocation>
</comment>
<comment type="similarity">
    <text evidence="1">Belongs to the YdjC deacetylase family. ChbG subfamily.</text>
</comment>
<proteinExistence type="inferred from homology"/>
<accession>Q5PHB3</accession>
<dbReference type="EC" id="3.5.1.105" evidence="1"/>
<dbReference type="EMBL" id="CP000026">
    <property type="protein sequence ID" value="AAV77460.1"/>
    <property type="molecule type" value="Genomic_DNA"/>
</dbReference>
<dbReference type="RefSeq" id="WP_000442730.1">
    <property type="nucleotide sequence ID" value="NC_006511.1"/>
</dbReference>
<dbReference type="SMR" id="Q5PHB3"/>
<dbReference type="KEGG" id="spt:SPA1527"/>
<dbReference type="HOGENOM" id="CLU_064244_4_1_6"/>
<dbReference type="UniPathway" id="UPA00349"/>
<dbReference type="Proteomes" id="UP000008185">
    <property type="component" value="Chromosome"/>
</dbReference>
<dbReference type="GO" id="GO:0005737">
    <property type="term" value="C:cytoplasm"/>
    <property type="evidence" value="ECO:0007669"/>
    <property type="project" value="UniProtKB-SubCell"/>
</dbReference>
<dbReference type="GO" id="GO:0036311">
    <property type="term" value="F:chitin disaccharide deacetylase activity"/>
    <property type="evidence" value="ECO:0007669"/>
    <property type="project" value="UniProtKB-UniRule"/>
</dbReference>
<dbReference type="GO" id="GO:0019213">
    <property type="term" value="F:deacetylase activity"/>
    <property type="evidence" value="ECO:0007669"/>
    <property type="project" value="TreeGrafter"/>
</dbReference>
<dbReference type="GO" id="GO:0046872">
    <property type="term" value="F:metal ion binding"/>
    <property type="evidence" value="ECO:0007669"/>
    <property type="project" value="UniProtKB-KW"/>
</dbReference>
<dbReference type="GO" id="GO:0006032">
    <property type="term" value="P:chitin catabolic process"/>
    <property type="evidence" value="ECO:0007669"/>
    <property type="project" value="UniProtKB-UniPathway"/>
</dbReference>
<dbReference type="GO" id="GO:0052777">
    <property type="term" value="P:diacetylchitobiose catabolic process"/>
    <property type="evidence" value="ECO:0007669"/>
    <property type="project" value="UniProtKB-UniRule"/>
</dbReference>
<dbReference type="GO" id="GO:0000272">
    <property type="term" value="P:polysaccharide catabolic process"/>
    <property type="evidence" value="ECO:0007669"/>
    <property type="project" value="UniProtKB-UniRule"/>
</dbReference>
<dbReference type="CDD" id="cd10803">
    <property type="entry name" value="YdjC_EF3048_like"/>
    <property type="match status" value="1"/>
</dbReference>
<dbReference type="FunFam" id="3.20.20.370:FF:000001">
    <property type="entry name" value="Chitooligosaccharide deacetylase"/>
    <property type="match status" value="1"/>
</dbReference>
<dbReference type="Gene3D" id="3.20.20.370">
    <property type="entry name" value="Glycoside hydrolase/deacetylase"/>
    <property type="match status" value="1"/>
</dbReference>
<dbReference type="HAMAP" id="MF_01246">
    <property type="entry name" value="COD"/>
    <property type="match status" value="1"/>
</dbReference>
<dbReference type="InterPro" id="IPR022948">
    <property type="entry name" value="COD_ChbG_bac"/>
</dbReference>
<dbReference type="InterPro" id="IPR011330">
    <property type="entry name" value="Glyco_hydro/deAcase_b/a-brl"/>
</dbReference>
<dbReference type="InterPro" id="IPR006879">
    <property type="entry name" value="YdjC-like"/>
</dbReference>
<dbReference type="NCBIfam" id="NF002559">
    <property type="entry name" value="PRK02134.1"/>
    <property type="match status" value="1"/>
</dbReference>
<dbReference type="PANTHER" id="PTHR31609:SF1">
    <property type="entry name" value="CARBOHYDRATE DEACETYLASE"/>
    <property type="match status" value="1"/>
</dbReference>
<dbReference type="PANTHER" id="PTHR31609">
    <property type="entry name" value="YDJC DEACETYLASE FAMILY MEMBER"/>
    <property type="match status" value="1"/>
</dbReference>
<dbReference type="Pfam" id="PF04794">
    <property type="entry name" value="YdjC"/>
    <property type="match status" value="1"/>
</dbReference>
<dbReference type="SUPFAM" id="SSF88713">
    <property type="entry name" value="Glycoside hydrolase/deacetylase"/>
    <property type="match status" value="1"/>
</dbReference>
<reference key="1">
    <citation type="journal article" date="2004" name="Nat. Genet.">
        <title>Comparison of genome degradation in Paratyphi A and Typhi, human-restricted serovars of Salmonella enterica that cause typhoid.</title>
        <authorList>
            <person name="McClelland M."/>
            <person name="Sanderson K.E."/>
            <person name="Clifton S.W."/>
            <person name="Latreille P."/>
            <person name="Porwollik S."/>
            <person name="Sabo A."/>
            <person name="Meyer R."/>
            <person name="Bieri T."/>
            <person name="Ozersky P."/>
            <person name="McLellan M."/>
            <person name="Harkins C.R."/>
            <person name="Wang C."/>
            <person name="Nguyen C."/>
            <person name="Berghoff A."/>
            <person name="Elliott G."/>
            <person name="Kohlberg S."/>
            <person name="Strong C."/>
            <person name="Du F."/>
            <person name="Carter J."/>
            <person name="Kremizki C."/>
            <person name="Layman D."/>
            <person name="Leonard S."/>
            <person name="Sun H."/>
            <person name="Fulton L."/>
            <person name="Nash W."/>
            <person name="Miner T."/>
            <person name="Minx P."/>
            <person name="Delehaunty K."/>
            <person name="Fronick C."/>
            <person name="Magrini V."/>
            <person name="Nhan M."/>
            <person name="Warren W."/>
            <person name="Florea L."/>
            <person name="Spieth J."/>
            <person name="Wilson R.K."/>
        </authorList>
    </citation>
    <scope>NUCLEOTIDE SEQUENCE [LARGE SCALE GENOMIC DNA]</scope>
    <source>
        <strain>ATCC 9150 / SARB42</strain>
    </source>
</reference>
<sequence>MERVLIVNADDFGLSKGQNYGIVEAYRNGVVTSTTALVNGEAIDHAAQLSRELPALGVGMHFVLTLGKPVSEMPGLTRDGLLGKWIWQMAEEDTLPLDEIAHELACQYQRFIDVFGREPTHLDSHHHVHMFPQIFPIVARFAAQRGIALRIDRQTVLNADDLPSDLRSTQGFSSEFYGEEITEACFLRILDASAHRGEASLEVMCHPAFVDNIIRQSAYCYPRLTELEVLTSASLKAAIAERGYRPGSFLDI</sequence>
<evidence type="ECO:0000255" key="1">
    <source>
        <dbReference type="HAMAP-Rule" id="MF_01246"/>
    </source>
</evidence>
<keyword id="KW-0119">Carbohydrate metabolism</keyword>
<keyword id="KW-0146">Chitin degradation</keyword>
<keyword id="KW-0963">Cytoplasm</keyword>
<keyword id="KW-0378">Hydrolase</keyword>
<keyword id="KW-0460">Magnesium</keyword>
<keyword id="KW-0479">Metal-binding</keyword>
<keyword id="KW-0624">Polysaccharide degradation</keyword>
<name>CHBG_SALPA</name>
<feature type="chain" id="PRO_1000067087" description="Chitooligosaccharide deacetylase">
    <location>
        <begin position="1"/>
        <end position="252"/>
    </location>
</feature>
<feature type="binding site" evidence="1">
    <location>
        <position position="61"/>
    </location>
    <ligand>
        <name>Mg(2+)</name>
        <dbReference type="ChEBI" id="CHEBI:18420"/>
    </ligand>
</feature>
<feature type="binding site" evidence="1">
    <location>
        <position position="125"/>
    </location>
    <ligand>
        <name>Mg(2+)</name>
        <dbReference type="ChEBI" id="CHEBI:18420"/>
    </ligand>
</feature>